<sequence>MRPLTEEETRVMFEKIAKYIGENLQLLVDRPDGTYCFRLHNDRVYYVSEMMLKLAANISGDKLVSLGTCFGKFTKTHKFRLHVTALDYLAPYAKYKVWVKPGAEQSFLYGNHVLKSGLGRITENTSQYQGVVVYSMADIPLGFGVAAKSTQDCRKVDPMAIVVFHQADIGEYVRHEETLT</sequence>
<gene>
    <name type="primary">Nip7</name>
</gene>
<proteinExistence type="evidence at protein level"/>
<feature type="chain" id="PRO_0000218774" description="60S ribosome subunit biogenesis protein NIP7 homolog">
    <location>
        <begin position="1"/>
        <end position="180"/>
    </location>
</feature>
<feature type="domain" description="PUA" evidence="3">
    <location>
        <begin position="94"/>
        <end position="170"/>
    </location>
</feature>
<feature type="region of interest" description="N-terminal domain" evidence="1">
    <location>
        <begin position="1"/>
        <end position="92"/>
    </location>
</feature>
<feature type="region of interest" description="C-terminal domain" evidence="1">
    <location>
        <begin position="93"/>
        <end position="180"/>
    </location>
</feature>
<feature type="sequence conflict" description="In Ref. 1; BAB22972." evidence="4" ref="1">
    <original>R</original>
    <variation>P</variation>
    <location>
        <position position="10"/>
    </location>
</feature>
<organism>
    <name type="scientific">Mus musculus</name>
    <name type="common">Mouse</name>
    <dbReference type="NCBI Taxonomy" id="10090"/>
    <lineage>
        <taxon>Eukaryota</taxon>
        <taxon>Metazoa</taxon>
        <taxon>Chordata</taxon>
        <taxon>Craniata</taxon>
        <taxon>Vertebrata</taxon>
        <taxon>Euteleostomi</taxon>
        <taxon>Mammalia</taxon>
        <taxon>Eutheria</taxon>
        <taxon>Euarchontoglires</taxon>
        <taxon>Glires</taxon>
        <taxon>Rodentia</taxon>
        <taxon>Myomorpha</taxon>
        <taxon>Muroidea</taxon>
        <taxon>Muridae</taxon>
        <taxon>Murinae</taxon>
        <taxon>Mus</taxon>
        <taxon>Mus</taxon>
    </lineage>
</organism>
<comment type="function">
    <text evidence="1">Required for proper 34S pre-rRNA processing and 60S ribosome subunit assembly.</text>
</comment>
<comment type="subunit">
    <text evidence="2">Monomer. Interacts with pre-ribosome complex. May bind to RNA. Interacts with NOL8. Interacts with FTSJ3 (By similarity). Interacts with DDX24 (By similarity).</text>
</comment>
<comment type="subcellular location">
    <subcellularLocation>
        <location evidence="1">Nucleus</location>
        <location evidence="1">Nucleolus</location>
    </subcellularLocation>
</comment>
<comment type="similarity">
    <text evidence="4">Belongs to the NIP7 family.</text>
</comment>
<keyword id="KW-0539">Nucleus</keyword>
<keyword id="KW-1185">Reference proteome</keyword>
<keyword id="KW-0690">Ribosome biogenesis</keyword>
<keyword id="KW-0694">RNA-binding</keyword>
<reference key="1">
    <citation type="journal article" date="2005" name="Science">
        <title>The transcriptional landscape of the mammalian genome.</title>
        <authorList>
            <person name="Carninci P."/>
            <person name="Kasukawa T."/>
            <person name="Katayama S."/>
            <person name="Gough J."/>
            <person name="Frith M.C."/>
            <person name="Maeda N."/>
            <person name="Oyama R."/>
            <person name="Ravasi T."/>
            <person name="Lenhard B."/>
            <person name="Wells C."/>
            <person name="Kodzius R."/>
            <person name="Shimokawa K."/>
            <person name="Bajic V.B."/>
            <person name="Brenner S.E."/>
            <person name="Batalov S."/>
            <person name="Forrest A.R."/>
            <person name="Zavolan M."/>
            <person name="Davis M.J."/>
            <person name="Wilming L.G."/>
            <person name="Aidinis V."/>
            <person name="Allen J.E."/>
            <person name="Ambesi-Impiombato A."/>
            <person name="Apweiler R."/>
            <person name="Aturaliya R.N."/>
            <person name="Bailey T.L."/>
            <person name="Bansal M."/>
            <person name="Baxter L."/>
            <person name="Beisel K.W."/>
            <person name="Bersano T."/>
            <person name="Bono H."/>
            <person name="Chalk A.M."/>
            <person name="Chiu K.P."/>
            <person name="Choudhary V."/>
            <person name="Christoffels A."/>
            <person name="Clutterbuck D.R."/>
            <person name="Crowe M.L."/>
            <person name="Dalla E."/>
            <person name="Dalrymple B.P."/>
            <person name="de Bono B."/>
            <person name="Della Gatta G."/>
            <person name="di Bernardo D."/>
            <person name="Down T."/>
            <person name="Engstrom P."/>
            <person name="Fagiolini M."/>
            <person name="Faulkner G."/>
            <person name="Fletcher C.F."/>
            <person name="Fukushima T."/>
            <person name="Furuno M."/>
            <person name="Futaki S."/>
            <person name="Gariboldi M."/>
            <person name="Georgii-Hemming P."/>
            <person name="Gingeras T.R."/>
            <person name="Gojobori T."/>
            <person name="Green R.E."/>
            <person name="Gustincich S."/>
            <person name="Harbers M."/>
            <person name="Hayashi Y."/>
            <person name="Hensch T.K."/>
            <person name="Hirokawa N."/>
            <person name="Hill D."/>
            <person name="Huminiecki L."/>
            <person name="Iacono M."/>
            <person name="Ikeo K."/>
            <person name="Iwama A."/>
            <person name="Ishikawa T."/>
            <person name="Jakt M."/>
            <person name="Kanapin A."/>
            <person name="Katoh M."/>
            <person name="Kawasawa Y."/>
            <person name="Kelso J."/>
            <person name="Kitamura H."/>
            <person name="Kitano H."/>
            <person name="Kollias G."/>
            <person name="Krishnan S.P."/>
            <person name="Kruger A."/>
            <person name="Kummerfeld S.K."/>
            <person name="Kurochkin I.V."/>
            <person name="Lareau L.F."/>
            <person name="Lazarevic D."/>
            <person name="Lipovich L."/>
            <person name="Liu J."/>
            <person name="Liuni S."/>
            <person name="McWilliam S."/>
            <person name="Madan Babu M."/>
            <person name="Madera M."/>
            <person name="Marchionni L."/>
            <person name="Matsuda H."/>
            <person name="Matsuzawa S."/>
            <person name="Miki H."/>
            <person name="Mignone F."/>
            <person name="Miyake S."/>
            <person name="Morris K."/>
            <person name="Mottagui-Tabar S."/>
            <person name="Mulder N."/>
            <person name="Nakano N."/>
            <person name="Nakauchi H."/>
            <person name="Ng P."/>
            <person name="Nilsson R."/>
            <person name="Nishiguchi S."/>
            <person name="Nishikawa S."/>
            <person name="Nori F."/>
            <person name="Ohara O."/>
            <person name="Okazaki Y."/>
            <person name="Orlando V."/>
            <person name="Pang K.C."/>
            <person name="Pavan W.J."/>
            <person name="Pavesi G."/>
            <person name="Pesole G."/>
            <person name="Petrovsky N."/>
            <person name="Piazza S."/>
            <person name="Reed J."/>
            <person name="Reid J.F."/>
            <person name="Ring B.Z."/>
            <person name="Ringwald M."/>
            <person name="Rost B."/>
            <person name="Ruan Y."/>
            <person name="Salzberg S.L."/>
            <person name="Sandelin A."/>
            <person name="Schneider C."/>
            <person name="Schoenbach C."/>
            <person name="Sekiguchi K."/>
            <person name="Semple C.A."/>
            <person name="Seno S."/>
            <person name="Sessa L."/>
            <person name="Sheng Y."/>
            <person name="Shibata Y."/>
            <person name="Shimada H."/>
            <person name="Shimada K."/>
            <person name="Silva D."/>
            <person name="Sinclair B."/>
            <person name="Sperling S."/>
            <person name="Stupka E."/>
            <person name="Sugiura K."/>
            <person name="Sultana R."/>
            <person name="Takenaka Y."/>
            <person name="Taki K."/>
            <person name="Tammoja K."/>
            <person name="Tan S.L."/>
            <person name="Tang S."/>
            <person name="Taylor M.S."/>
            <person name="Tegner J."/>
            <person name="Teichmann S.A."/>
            <person name="Ueda H.R."/>
            <person name="van Nimwegen E."/>
            <person name="Verardo R."/>
            <person name="Wei C.L."/>
            <person name="Yagi K."/>
            <person name="Yamanishi H."/>
            <person name="Zabarovsky E."/>
            <person name="Zhu S."/>
            <person name="Zimmer A."/>
            <person name="Hide W."/>
            <person name="Bult C."/>
            <person name="Grimmond S.M."/>
            <person name="Teasdale R.D."/>
            <person name="Liu E.T."/>
            <person name="Brusic V."/>
            <person name="Quackenbush J."/>
            <person name="Wahlestedt C."/>
            <person name="Mattick J.S."/>
            <person name="Hume D.A."/>
            <person name="Kai C."/>
            <person name="Sasaki D."/>
            <person name="Tomaru Y."/>
            <person name="Fukuda S."/>
            <person name="Kanamori-Katayama M."/>
            <person name="Suzuki M."/>
            <person name="Aoki J."/>
            <person name="Arakawa T."/>
            <person name="Iida J."/>
            <person name="Imamura K."/>
            <person name="Itoh M."/>
            <person name="Kato T."/>
            <person name="Kawaji H."/>
            <person name="Kawagashira N."/>
            <person name="Kawashima T."/>
            <person name="Kojima M."/>
            <person name="Kondo S."/>
            <person name="Konno H."/>
            <person name="Nakano K."/>
            <person name="Ninomiya N."/>
            <person name="Nishio T."/>
            <person name="Okada M."/>
            <person name="Plessy C."/>
            <person name="Shibata K."/>
            <person name="Shiraki T."/>
            <person name="Suzuki S."/>
            <person name="Tagami M."/>
            <person name="Waki K."/>
            <person name="Watahiki A."/>
            <person name="Okamura-Oho Y."/>
            <person name="Suzuki H."/>
            <person name="Kawai J."/>
            <person name="Hayashizaki Y."/>
        </authorList>
    </citation>
    <scope>NUCLEOTIDE SEQUENCE [LARGE SCALE MRNA]</scope>
    <source>
        <strain>C57BL/6J</strain>
        <tissue>Embryo</tissue>
        <tissue>Embryonic head</tissue>
    </source>
</reference>
<reference key="2">
    <citation type="journal article" date="2004" name="Genome Res.">
        <title>The status, quality, and expansion of the NIH full-length cDNA project: the Mammalian Gene Collection (MGC).</title>
        <authorList>
            <consortium name="The MGC Project Team"/>
        </authorList>
    </citation>
    <scope>NUCLEOTIDE SEQUENCE [LARGE SCALE MRNA]</scope>
    <source>
        <strain>FVB/N</strain>
        <tissue>Mammary gland</tissue>
    </source>
</reference>
<reference key="3">
    <citation type="journal article" date="2010" name="Cell">
        <title>A tissue-specific atlas of mouse protein phosphorylation and expression.</title>
        <authorList>
            <person name="Huttlin E.L."/>
            <person name="Jedrychowski M.P."/>
            <person name="Elias J.E."/>
            <person name="Goswami T."/>
            <person name="Rad R."/>
            <person name="Beausoleil S.A."/>
            <person name="Villen J."/>
            <person name="Haas W."/>
            <person name="Sowa M.E."/>
            <person name="Gygi S.P."/>
        </authorList>
    </citation>
    <scope>IDENTIFICATION BY MASS SPECTROMETRY [LARGE SCALE ANALYSIS]</scope>
    <source>
        <tissue>Spleen</tissue>
    </source>
</reference>
<name>NIP7_MOUSE</name>
<protein>
    <recommendedName>
        <fullName>60S ribosome subunit biogenesis protein NIP7 homolog</fullName>
    </recommendedName>
    <alternativeName>
        <fullName>Nucleolar pre-rRNA processing protein NIP7</fullName>
    </alternativeName>
    <alternativeName>
        <fullName>PEachy</fullName>
    </alternativeName>
    <alternativeName>
        <fullName>kDa93</fullName>
    </alternativeName>
</protein>
<dbReference type="EMBL" id="AK003739">
    <property type="protein sequence ID" value="BAB22972.1"/>
    <property type="molecule type" value="mRNA"/>
</dbReference>
<dbReference type="EMBL" id="AK014290">
    <property type="protein sequence ID" value="BAB29247.1"/>
    <property type="molecule type" value="mRNA"/>
</dbReference>
<dbReference type="EMBL" id="BC003972">
    <property type="protein sequence ID" value="AAH03972.1"/>
    <property type="molecule type" value="mRNA"/>
</dbReference>
<dbReference type="CCDS" id="CCDS22644.1"/>
<dbReference type="RefSeq" id="NP_079667.2">
    <property type="nucleotide sequence ID" value="NM_025391.2"/>
</dbReference>
<dbReference type="SMR" id="Q9CXK8"/>
<dbReference type="BioGRID" id="211262">
    <property type="interactions" value="5"/>
</dbReference>
<dbReference type="FunCoup" id="Q9CXK8">
    <property type="interactions" value="2754"/>
</dbReference>
<dbReference type="IntAct" id="Q9CXK8">
    <property type="interactions" value="1"/>
</dbReference>
<dbReference type="MINT" id="Q9CXK8"/>
<dbReference type="STRING" id="10090.ENSMUSP00000034392"/>
<dbReference type="GlyGen" id="Q9CXK8">
    <property type="glycosylation" value="1 site, 1 O-linked glycan (1 site)"/>
</dbReference>
<dbReference type="iPTMnet" id="Q9CXK8"/>
<dbReference type="PhosphoSitePlus" id="Q9CXK8"/>
<dbReference type="PaxDb" id="10090-ENSMUSP00000034392"/>
<dbReference type="PeptideAtlas" id="Q9CXK8"/>
<dbReference type="ProteomicsDB" id="252895"/>
<dbReference type="Pumba" id="Q9CXK8"/>
<dbReference type="Antibodypedia" id="16183">
    <property type="antibodies" value="227 antibodies from 31 providers"/>
</dbReference>
<dbReference type="DNASU" id="66164"/>
<dbReference type="Ensembl" id="ENSMUST00000034392.13">
    <property type="protein sequence ID" value="ENSMUSP00000034392.6"/>
    <property type="gene ID" value="ENSMUSG00000031917.13"/>
</dbReference>
<dbReference type="GeneID" id="66164"/>
<dbReference type="KEGG" id="mmu:66164"/>
<dbReference type="UCSC" id="uc009ngz.2">
    <property type="organism name" value="mouse"/>
</dbReference>
<dbReference type="AGR" id="MGI:1913414"/>
<dbReference type="CTD" id="51388"/>
<dbReference type="MGI" id="MGI:1913414">
    <property type="gene designation" value="Nip7"/>
</dbReference>
<dbReference type="VEuPathDB" id="HostDB:ENSMUSG00000031917"/>
<dbReference type="eggNOG" id="KOG3492">
    <property type="taxonomic scope" value="Eukaryota"/>
</dbReference>
<dbReference type="GeneTree" id="ENSGT00950000182971"/>
<dbReference type="HOGENOM" id="CLU_097217_0_0_1"/>
<dbReference type="InParanoid" id="Q9CXK8"/>
<dbReference type="OMA" id="LISMGTC"/>
<dbReference type="OrthoDB" id="27490at2759"/>
<dbReference type="PhylomeDB" id="Q9CXK8"/>
<dbReference type="TreeFam" id="TF300081"/>
<dbReference type="Reactome" id="R-MMU-6791226">
    <property type="pathway name" value="Major pathway of rRNA processing in the nucleolus and cytosol"/>
</dbReference>
<dbReference type="BioGRID-ORCS" id="66164">
    <property type="hits" value="29 hits in 76 CRISPR screens"/>
</dbReference>
<dbReference type="ChiTaRS" id="Nip7">
    <property type="organism name" value="mouse"/>
</dbReference>
<dbReference type="PRO" id="PR:Q9CXK8"/>
<dbReference type="Proteomes" id="UP000000589">
    <property type="component" value="Chromosome 8"/>
</dbReference>
<dbReference type="RNAct" id="Q9CXK8">
    <property type="molecule type" value="protein"/>
</dbReference>
<dbReference type="Bgee" id="ENSMUSG00000031917">
    <property type="expression patterns" value="Expressed in cleaving embryo and 275 other cell types or tissues"/>
</dbReference>
<dbReference type="ExpressionAtlas" id="Q9CXK8">
    <property type="expression patterns" value="baseline and differential"/>
</dbReference>
<dbReference type="GO" id="GO:0005829">
    <property type="term" value="C:cytosol"/>
    <property type="evidence" value="ECO:0007669"/>
    <property type="project" value="Ensembl"/>
</dbReference>
<dbReference type="GO" id="GO:0005730">
    <property type="term" value="C:nucleolus"/>
    <property type="evidence" value="ECO:0007669"/>
    <property type="project" value="UniProtKB-SubCell"/>
</dbReference>
<dbReference type="GO" id="GO:0005654">
    <property type="term" value="C:nucleoplasm"/>
    <property type="evidence" value="ECO:0007669"/>
    <property type="project" value="Ensembl"/>
</dbReference>
<dbReference type="GO" id="GO:0003723">
    <property type="term" value="F:RNA binding"/>
    <property type="evidence" value="ECO:0007669"/>
    <property type="project" value="UniProtKB-KW"/>
</dbReference>
<dbReference type="GO" id="GO:0042255">
    <property type="term" value="P:ribosome assembly"/>
    <property type="evidence" value="ECO:0007669"/>
    <property type="project" value="InterPro"/>
</dbReference>
<dbReference type="CDD" id="cd21146">
    <property type="entry name" value="Nip7_N_euk"/>
    <property type="match status" value="1"/>
</dbReference>
<dbReference type="CDD" id="cd21151">
    <property type="entry name" value="PUA_Nip7-like"/>
    <property type="match status" value="1"/>
</dbReference>
<dbReference type="FunFam" id="2.30.130.10:FF:000002">
    <property type="entry name" value="60S ribosome subunit biogenesis protein NIP7 homolog"/>
    <property type="match status" value="1"/>
</dbReference>
<dbReference type="FunFam" id="3.10.450.220:FF:000001">
    <property type="entry name" value="60S ribosome subunit biogenesis protein NIP7 homolog"/>
    <property type="match status" value="1"/>
</dbReference>
<dbReference type="Gene3D" id="3.10.450.220">
    <property type="match status" value="1"/>
</dbReference>
<dbReference type="Gene3D" id="2.30.130.10">
    <property type="entry name" value="PUA domain"/>
    <property type="match status" value="1"/>
</dbReference>
<dbReference type="InterPro" id="IPR040598">
    <property type="entry name" value="NIP7_N"/>
</dbReference>
<dbReference type="InterPro" id="IPR055359">
    <property type="entry name" value="Nip7_N_euk"/>
</dbReference>
<dbReference type="InterPro" id="IPR002478">
    <property type="entry name" value="PUA"/>
</dbReference>
<dbReference type="InterPro" id="IPR015947">
    <property type="entry name" value="PUA-like_sf"/>
</dbReference>
<dbReference type="InterPro" id="IPR036974">
    <property type="entry name" value="PUA_sf"/>
</dbReference>
<dbReference type="InterPro" id="IPR016686">
    <property type="entry name" value="Ribosomal_synth_fac_NIP7"/>
</dbReference>
<dbReference type="InterPro" id="IPR005155">
    <property type="entry name" value="UPF0113_PUA"/>
</dbReference>
<dbReference type="PANTHER" id="PTHR23415">
    <property type="entry name" value="CYCLIN-DEPENDENT KINASES REGULATORY SUBUNIT/60S RIBOSOME SUBUNIT BIOGENESIS PROTEIN NIP7"/>
    <property type="match status" value="1"/>
</dbReference>
<dbReference type="Pfam" id="PF17833">
    <property type="entry name" value="pre-PUA_NIP7"/>
    <property type="match status" value="1"/>
</dbReference>
<dbReference type="Pfam" id="PF03657">
    <property type="entry name" value="UPF0113"/>
    <property type="match status" value="1"/>
</dbReference>
<dbReference type="PIRSF" id="PIRSF017190">
    <property type="entry name" value="Rbsml_synth_fac_NIP7"/>
    <property type="match status" value="1"/>
</dbReference>
<dbReference type="SMART" id="SM00359">
    <property type="entry name" value="PUA"/>
    <property type="match status" value="1"/>
</dbReference>
<dbReference type="SUPFAM" id="SSF88802">
    <property type="entry name" value="Pre-PUA domain"/>
    <property type="match status" value="1"/>
</dbReference>
<dbReference type="SUPFAM" id="SSF88697">
    <property type="entry name" value="PUA domain-like"/>
    <property type="match status" value="1"/>
</dbReference>
<dbReference type="PROSITE" id="PS50890">
    <property type="entry name" value="PUA"/>
    <property type="match status" value="1"/>
</dbReference>
<accession>Q9CXK8</accession>
<accession>Q9D1B4</accession>
<evidence type="ECO:0000250" key="1"/>
<evidence type="ECO:0000250" key="2">
    <source>
        <dbReference type="UniProtKB" id="Q9Y221"/>
    </source>
</evidence>
<evidence type="ECO:0000255" key="3">
    <source>
        <dbReference type="PROSITE-ProRule" id="PRU00161"/>
    </source>
</evidence>
<evidence type="ECO:0000305" key="4"/>